<keyword id="KW-0012">Acyltransferase</keyword>
<keyword id="KW-0028">Amino-acid biosynthesis</keyword>
<keyword id="KW-0963">Cytoplasm</keyword>
<keyword id="KW-0486">Methionine biosynthesis</keyword>
<keyword id="KW-0808">Transferase</keyword>
<reference key="1">
    <citation type="submission" date="2009-02" db="EMBL/GenBank/DDBJ databases">
        <title>Vibrio splendidus str. LGP32 complete genome.</title>
        <authorList>
            <person name="Mazel D."/>
            <person name="Le Roux F."/>
        </authorList>
    </citation>
    <scope>NUCLEOTIDE SEQUENCE [LARGE SCALE GENOMIC DNA]</scope>
    <source>
        <strain>LGP32</strain>
    </source>
</reference>
<accession>B7VPB2</accession>
<gene>
    <name evidence="1" type="primary">metAS</name>
    <name type="ordered locus">VS_1677</name>
</gene>
<sequence length="313" mass="36371">MPIRIPDQLPASDVLREENIFIMPLSRASTQEIRPLRVLILNLMPKKIETETQFLRLLSNSPLQVDVELLRIDDRPSKNTPTEHLDNFYRQFEMVKGRNFDGLIITGAPLGLVQFEDVIYWDHLKTIMEWANKHVTSTLYVCWAAQAGLKLLYDLPKRTRKDKLSGVYNHEIHNPYHPILRGFDDTFLAPHSRYADFSQEYLAEHTDLDVLATSDVAGVYLAATKDKRNVFVTGHPEYDAHTLHNEYIRDLGEGMEPVIPINYYPNNNPDNKPVASWRSHGHLLFSNWLNYCVYQQTPYDLDHFSEDNFTKDD</sequence>
<comment type="function">
    <text evidence="1">Transfers a succinyl group from succinyl-CoA to L-homoserine, forming succinyl-L-homoserine.</text>
</comment>
<comment type="catalytic activity">
    <reaction evidence="1">
        <text>L-homoserine + succinyl-CoA = O-succinyl-L-homoserine + CoA</text>
        <dbReference type="Rhea" id="RHEA:22008"/>
        <dbReference type="ChEBI" id="CHEBI:57287"/>
        <dbReference type="ChEBI" id="CHEBI:57292"/>
        <dbReference type="ChEBI" id="CHEBI:57476"/>
        <dbReference type="ChEBI" id="CHEBI:57661"/>
        <dbReference type="EC" id="2.3.1.46"/>
    </reaction>
</comment>
<comment type="pathway">
    <text evidence="1">Amino-acid biosynthesis; L-methionine biosynthesis via de novo pathway; O-succinyl-L-homoserine from L-homoserine: step 1/1.</text>
</comment>
<comment type="subcellular location">
    <subcellularLocation>
        <location evidence="1">Cytoplasm</location>
    </subcellularLocation>
</comment>
<comment type="similarity">
    <text evidence="1">Belongs to the MetA family.</text>
</comment>
<evidence type="ECO:0000255" key="1">
    <source>
        <dbReference type="HAMAP-Rule" id="MF_00295"/>
    </source>
</evidence>
<name>METAS_VIBA3</name>
<protein>
    <recommendedName>
        <fullName evidence="1">Homoserine O-succinyltransferase</fullName>
        <shortName evidence="1">HST</shortName>
        <ecNumber evidence="1">2.3.1.46</ecNumber>
    </recommendedName>
    <alternativeName>
        <fullName evidence="1">Homoserine transsuccinylase</fullName>
        <shortName evidence="1">HTS</shortName>
    </alternativeName>
</protein>
<dbReference type="EC" id="2.3.1.46" evidence="1"/>
<dbReference type="EMBL" id="FM954972">
    <property type="protein sequence ID" value="CAV18861.1"/>
    <property type="molecule type" value="Genomic_DNA"/>
</dbReference>
<dbReference type="SMR" id="B7VPB2"/>
<dbReference type="STRING" id="575788.VS_1677"/>
<dbReference type="KEGG" id="vsp:VS_1677"/>
<dbReference type="eggNOG" id="COG1897">
    <property type="taxonomic scope" value="Bacteria"/>
</dbReference>
<dbReference type="HOGENOM" id="CLU_057851_0_1_6"/>
<dbReference type="UniPathway" id="UPA00051">
    <property type="reaction ID" value="UER00075"/>
</dbReference>
<dbReference type="Proteomes" id="UP000009100">
    <property type="component" value="Chromosome 1"/>
</dbReference>
<dbReference type="GO" id="GO:0005737">
    <property type="term" value="C:cytoplasm"/>
    <property type="evidence" value="ECO:0007669"/>
    <property type="project" value="UniProtKB-SubCell"/>
</dbReference>
<dbReference type="GO" id="GO:0004414">
    <property type="term" value="F:homoserine O-acetyltransferase activity"/>
    <property type="evidence" value="ECO:0007669"/>
    <property type="project" value="UniProtKB-UniRule"/>
</dbReference>
<dbReference type="GO" id="GO:0008899">
    <property type="term" value="F:homoserine O-succinyltransferase activity"/>
    <property type="evidence" value="ECO:0007669"/>
    <property type="project" value="UniProtKB-EC"/>
</dbReference>
<dbReference type="GO" id="GO:0019281">
    <property type="term" value="P:L-methionine biosynthetic process from homoserine via O-succinyl-L-homoserine and cystathionine"/>
    <property type="evidence" value="ECO:0007669"/>
    <property type="project" value="InterPro"/>
</dbReference>
<dbReference type="CDD" id="cd03131">
    <property type="entry name" value="GATase1_HTS"/>
    <property type="match status" value="1"/>
</dbReference>
<dbReference type="FunFam" id="3.40.50.880:FF:000004">
    <property type="entry name" value="Homoserine O-succinyltransferase"/>
    <property type="match status" value="1"/>
</dbReference>
<dbReference type="Gene3D" id="3.40.50.880">
    <property type="match status" value="1"/>
</dbReference>
<dbReference type="HAMAP" id="MF_00295">
    <property type="entry name" value="MetA_acyltransf"/>
    <property type="match status" value="1"/>
</dbReference>
<dbReference type="InterPro" id="IPR029062">
    <property type="entry name" value="Class_I_gatase-like"/>
</dbReference>
<dbReference type="InterPro" id="IPR005697">
    <property type="entry name" value="HST_MetA"/>
</dbReference>
<dbReference type="InterPro" id="IPR033752">
    <property type="entry name" value="MetA_family"/>
</dbReference>
<dbReference type="NCBIfam" id="TIGR01001">
    <property type="entry name" value="metA"/>
    <property type="match status" value="1"/>
</dbReference>
<dbReference type="PANTHER" id="PTHR20919">
    <property type="entry name" value="HOMOSERINE O-SUCCINYLTRANSFERASE"/>
    <property type="match status" value="1"/>
</dbReference>
<dbReference type="PANTHER" id="PTHR20919:SF0">
    <property type="entry name" value="HOMOSERINE O-SUCCINYLTRANSFERASE"/>
    <property type="match status" value="1"/>
</dbReference>
<dbReference type="Pfam" id="PF04204">
    <property type="entry name" value="HTS"/>
    <property type="match status" value="1"/>
</dbReference>
<dbReference type="PIRSF" id="PIRSF000450">
    <property type="entry name" value="H_ser_succinyltr"/>
    <property type="match status" value="1"/>
</dbReference>
<dbReference type="SUPFAM" id="SSF52317">
    <property type="entry name" value="Class I glutamine amidotransferase-like"/>
    <property type="match status" value="1"/>
</dbReference>
<organism>
    <name type="scientific">Vibrio atlanticus (strain LGP32)</name>
    <name type="common">Vibrio splendidus (strain Mel32)</name>
    <dbReference type="NCBI Taxonomy" id="575788"/>
    <lineage>
        <taxon>Bacteria</taxon>
        <taxon>Pseudomonadati</taxon>
        <taxon>Pseudomonadota</taxon>
        <taxon>Gammaproteobacteria</taxon>
        <taxon>Vibrionales</taxon>
        <taxon>Vibrionaceae</taxon>
        <taxon>Vibrio</taxon>
    </lineage>
</organism>
<feature type="chain" id="PRO_1000132718" description="Homoserine O-succinyltransferase">
    <location>
        <begin position="1"/>
        <end position="313"/>
    </location>
</feature>
<feature type="active site" description="Acyl-thioester intermediate" evidence="1">
    <location>
        <position position="142"/>
    </location>
</feature>
<feature type="active site" description="Proton acceptor" evidence="1">
    <location>
        <position position="235"/>
    </location>
</feature>
<feature type="active site" evidence="1">
    <location>
        <position position="237"/>
    </location>
</feature>
<feature type="binding site" evidence="1">
    <location>
        <position position="163"/>
    </location>
    <ligand>
        <name>substrate</name>
    </ligand>
</feature>
<feature type="binding site" evidence="1">
    <location>
        <position position="192"/>
    </location>
    <ligand>
        <name>substrate</name>
    </ligand>
</feature>
<feature type="binding site" evidence="1">
    <location>
        <position position="249"/>
    </location>
    <ligand>
        <name>substrate</name>
    </ligand>
</feature>
<feature type="site" description="Important for acyl-CoA specificity" evidence="1">
    <location>
        <position position="111"/>
    </location>
</feature>
<feature type="site" description="Important for substrate specificity" evidence="1">
    <location>
        <position position="192"/>
    </location>
</feature>
<proteinExistence type="inferred from homology"/>